<accession>Q8ELR9</accession>
<proteinExistence type="inferred from homology"/>
<comment type="function">
    <text evidence="1">Catalyzes the interconversion of L-alanine and D-alanine. May also act on other amino acids.</text>
</comment>
<comment type="catalytic activity">
    <reaction evidence="1">
        <text>L-alanine = D-alanine</text>
        <dbReference type="Rhea" id="RHEA:20249"/>
        <dbReference type="ChEBI" id="CHEBI:57416"/>
        <dbReference type="ChEBI" id="CHEBI:57972"/>
        <dbReference type="EC" id="5.1.1.1"/>
    </reaction>
</comment>
<comment type="cofactor">
    <cofactor evidence="1">
        <name>pyridoxal 5'-phosphate</name>
        <dbReference type="ChEBI" id="CHEBI:597326"/>
    </cofactor>
</comment>
<comment type="pathway">
    <text evidence="1">Amino-acid biosynthesis; D-alanine biosynthesis; D-alanine from L-alanine: step 1/1.</text>
</comment>
<comment type="similarity">
    <text evidence="1">Belongs to the alanine racemase family.</text>
</comment>
<name>ALR1_OCEIH</name>
<organism>
    <name type="scientific">Oceanobacillus iheyensis (strain DSM 14371 / CIP 107618 / JCM 11309 / KCTC 3954 / HTE831)</name>
    <dbReference type="NCBI Taxonomy" id="221109"/>
    <lineage>
        <taxon>Bacteria</taxon>
        <taxon>Bacillati</taxon>
        <taxon>Bacillota</taxon>
        <taxon>Bacilli</taxon>
        <taxon>Bacillales</taxon>
        <taxon>Bacillaceae</taxon>
        <taxon>Oceanobacillus</taxon>
    </lineage>
</organism>
<evidence type="ECO:0000255" key="1">
    <source>
        <dbReference type="HAMAP-Rule" id="MF_01201"/>
    </source>
</evidence>
<protein>
    <recommendedName>
        <fullName evidence="1">Alanine racemase 1</fullName>
        <ecNumber evidence="1">5.1.1.1</ecNumber>
    </recommendedName>
</protein>
<dbReference type="EC" id="5.1.1.1" evidence="1"/>
<dbReference type="EMBL" id="BA000028">
    <property type="protein sequence ID" value="BAC15105.1"/>
    <property type="molecule type" value="Genomic_DNA"/>
</dbReference>
<dbReference type="RefSeq" id="WP_011067546.1">
    <property type="nucleotide sequence ID" value="NC_004193.1"/>
</dbReference>
<dbReference type="SMR" id="Q8ELR9"/>
<dbReference type="STRING" id="221109.gene:10735401"/>
<dbReference type="KEGG" id="oih:OB3149"/>
<dbReference type="eggNOG" id="COG0787">
    <property type="taxonomic scope" value="Bacteria"/>
</dbReference>
<dbReference type="HOGENOM" id="CLU_028393_2_1_9"/>
<dbReference type="OrthoDB" id="9813814at2"/>
<dbReference type="PhylomeDB" id="Q8ELR9"/>
<dbReference type="UniPathway" id="UPA00042">
    <property type="reaction ID" value="UER00497"/>
</dbReference>
<dbReference type="Proteomes" id="UP000000822">
    <property type="component" value="Chromosome"/>
</dbReference>
<dbReference type="GO" id="GO:0005829">
    <property type="term" value="C:cytosol"/>
    <property type="evidence" value="ECO:0007669"/>
    <property type="project" value="TreeGrafter"/>
</dbReference>
<dbReference type="GO" id="GO:0008784">
    <property type="term" value="F:alanine racemase activity"/>
    <property type="evidence" value="ECO:0007669"/>
    <property type="project" value="UniProtKB-UniRule"/>
</dbReference>
<dbReference type="GO" id="GO:0030170">
    <property type="term" value="F:pyridoxal phosphate binding"/>
    <property type="evidence" value="ECO:0007669"/>
    <property type="project" value="UniProtKB-UniRule"/>
</dbReference>
<dbReference type="GO" id="GO:0030632">
    <property type="term" value="P:D-alanine biosynthetic process"/>
    <property type="evidence" value="ECO:0007669"/>
    <property type="project" value="UniProtKB-UniRule"/>
</dbReference>
<dbReference type="GO" id="GO:0009252">
    <property type="term" value="P:peptidoglycan biosynthetic process"/>
    <property type="evidence" value="ECO:0007669"/>
    <property type="project" value="TreeGrafter"/>
</dbReference>
<dbReference type="CDD" id="cd00430">
    <property type="entry name" value="PLPDE_III_AR"/>
    <property type="match status" value="1"/>
</dbReference>
<dbReference type="FunFam" id="3.20.20.10:FF:000002">
    <property type="entry name" value="Alanine racemase"/>
    <property type="match status" value="1"/>
</dbReference>
<dbReference type="Gene3D" id="3.20.20.10">
    <property type="entry name" value="Alanine racemase"/>
    <property type="match status" value="1"/>
</dbReference>
<dbReference type="Gene3D" id="2.40.37.10">
    <property type="entry name" value="Lyase, Ornithine Decarboxylase, Chain A, domain 1"/>
    <property type="match status" value="1"/>
</dbReference>
<dbReference type="HAMAP" id="MF_01201">
    <property type="entry name" value="Ala_racemase"/>
    <property type="match status" value="1"/>
</dbReference>
<dbReference type="InterPro" id="IPR000821">
    <property type="entry name" value="Ala_racemase"/>
</dbReference>
<dbReference type="InterPro" id="IPR009006">
    <property type="entry name" value="Ala_racemase/Decarboxylase_C"/>
</dbReference>
<dbReference type="InterPro" id="IPR011079">
    <property type="entry name" value="Ala_racemase_C"/>
</dbReference>
<dbReference type="InterPro" id="IPR001608">
    <property type="entry name" value="Ala_racemase_N"/>
</dbReference>
<dbReference type="InterPro" id="IPR020622">
    <property type="entry name" value="Ala_racemase_pyridoxalP-BS"/>
</dbReference>
<dbReference type="InterPro" id="IPR029066">
    <property type="entry name" value="PLP-binding_barrel"/>
</dbReference>
<dbReference type="NCBIfam" id="TIGR00492">
    <property type="entry name" value="alr"/>
    <property type="match status" value="1"/>
</dbReference>
<dbReference type="PANTHER" id="PTHR30511">
    <property type="entry name" value="ALANINE RACEMASE"/>
    <property type="match status" value="1"/>
</dbReference>
<dbReference type="PANTHER" id="PTHR30511:SF0">
    <property type="entry name" value="ALANINE RACEMASE, CATABOLIC-RELATED"/>
    <property type="match status" value="1"/>
</dbReference>
<dbReference type="Pfam" id="PF00842">
    <property type="entry name" value="Ala_racemase_C"/>
    <property type="match status" value="1"/>
</dbReference>
<dbReference type="Pfam" id="PF01168">
    <property type="entry name" value="Ala_racemase_N"/>
    <property type="match status" value="1"/>
</dbReference>
<dbReference type="PRINTS" id="PR00992">
    <property type="entry name" value="ALARACEMASE"/>
</dbReference>
<dbReference type="SMART" id="SM01005">
    <property type="entry name" value="Ala_racemase_C"/>
    <property type="match status" value="1"/>
</dbReference>
<dbReference type="SUPFAM" id="SSF50621">
    <property type="entry name" value="Alanine racemase C-terminal domain-like"/>
    <property type="match status" value="1"/>
</dbReference>
<dbReference type="SUPFAM" id="SSF51419">
    <property type="entry name" value="PLP-binding barrel"/>
    <property type="match status" value="1"/>
</dbReference>
<dbReference type="PROSITE" id="PS00395">
    <property type="entry name" value="ALANINE_RACEMASE"/>
    <property type="match status" value="1"/>
</dbReference>
<keyword id="KW-0413">Isomerase</keyword>
<keyword id="KW-0663">Pyridoxal phosphate</keyword>
<keyword id="KW-1185">Reference proteome</keyword>
<sequence>MKVTSYRDAWVEVSLDALTYNVRQFKNHLQEKSRLMAVVKADGYGHGAVPIARRSLEAGAEYLGVAFIDEALQIREAGILAPILLLGFTPSYAVREAVRHDLTLTVYSTETLEAIKDAARSLDKKAKIHIKVDSGMSRIGLRSSEEVISLMTSLQTEEIEVEGIFTHFADADNDESDAYTYKQFETFQGIMEALENEGYSIPIKHCCNSAATIAFPDMHMDMVRVGISLYGLYPGQHLKEILSLQQVMSFKAKPVLIKDVPPHQPISYGLTYETKETSKIATLPIGYADGFSRLLSNVGHVTVHGTACPIVGRICMDQSMIDVSEVQTDVTKDDIVTIFGDENAGYIPLDVVAEQMQTIHYETVCLIGKRVPRHYV</sequence>
<gene>
    <name type="primary">alr1</name>
    <name type="ordered locus">OB3149</name>
</gene>
<reference key="1">
    <citation type="journal article" date="2002" name="Nucleic Acids Res.">
        <title>Genome sequence of Oceanobacillus iheyensis isolated from the Iheya Ridge and its unexpected adaptive capabilities to extreme environments.</title>
        <authorList>
            <person name="Takami H."/>
            <person name="Takaki Y."/>
            <person name="Uchiyama I."/>
        </authorList>
    </citation>
    <scope>NUCLEOTIDE SEQUENCE [LARGE SCALE GENOMIC DNA]</scope>
    <source>
        <strain>DSM 14371 / CIP 107618 / JCM 11309 / KCTC 3954 / HTE831</strain>
    </source>
</reference>
<feature type="chain" id="PRO_0000114542" description="Alanine racemase 1">
    <location>
        <begin position="1"/>
        <end position="376"/>
    </location>
</feature>
<feature type="active site" description="Proton acceptor; specific for D-alanine" evidence="1">
    <location>
        <position position="40"/>
    </location>
</feature>
<feature type="active site" description="Proton acceptor; specific for L-alanine" evidence="1">
    <location>
        <position position="268"/>
    </location>
</feature>
<feature type="binding site" evidence="1">
    <location>
        <position position="138"/>
    </location>
    <ligand>
        <name>substrate</name>
    </ligand>
</feature>
<feature type="binding site" evidence="1">
    <location>
        <position position="316"/>
    </location>
    <ligand>
        <name>substrate</name>
    </ligand>
</feature>
<feature type="modified residue" description="N6-(pyridoxal phosphate)lysine" evidence="1">
    <location>
        <position position="40"/>
    </location>
</feature>